<gene>
    <name type="ordered locus">CGSHiGG_07710</name>
</gene>
<accession>A5UHY9</accession>
<feature type="chain" id="PRO_1000062307" description="UPF0352 protein CGSHiGG_07710">
    <location>
        <begin position="1"/>
        <end position="72"/>
    </location>
</feature>
<organism>
    <name type="scientific">Haemophilus influenzae (strain PittGG)</name>
    <dbReference type="NCBI Taxonomy" id="374931"/>
    <lineage>
        <taxon>Bacteria</taxon>
        <taxon>Pseudomonadati</taxon>
        <taxon>Pseudomonadota</taxon>
        <taxon>Gammaproteobacteria</taxon>
        <taxon>Pasteurellales</taxon>
        <taxon>Pasteurellaceae</taxon>
        <taxon>Haemophilus</taxon>
    </lineage>
</organism>
<name>Y7710_HAEIG</name>
<reference key="1">
    <citation type="journal article" date="2007" name="Genome Biol.">
        <title>Characterization and modeling of the Haemophilus influenzae core and supragenomes based on the complete genomic sequences of Rd and 12 clinical nontypeable strains.</title>
        <authorList>
            <person name="Hogg J.S."/>
            <person name="Hu F.Z."/>
            <person name="Janto B."/>
            <person name="Boissy R."/>
            <person name="Hayes J."/>
            <person name="Keefe R."/>
            <person name="Post J.C."/>
            <person name="Ehrlich G.D."/>
        </authorList>
    </citation>
    <scope>NUCLEOTIDE SEQUENCE [LARGE SCALE GENOMIC DNA]</scope>
    <source>
        <strain>PittGG</strain>
    </source>
</reference>
<comment type="similarity">
    <text evidence="1">Belongs to the UPF0352 family.</text>
</comment>
<dbReference type="EMBL" id="CP000672">
    <property type="protein sequence ID" value="ABR00395.1"/>
    <property type="molecule type" value="Genomic_DNA"/>
</dbReference>
<dbReference type="SMR" id="A5UHY9"/>
<dbReference type="KEGG" id="hiq:CGSHiGG_07710"/>
<dbReference type="HOGENOM" id="CLU_175457_0_0_6"/>
<dbReference type="Proteomes" id="UP000001990">
    <property type="component" value="Chromosome"/>
</dbReference>
<dbReference type="Gene3D" id="1.10.3390.10">
    <property type="entry name" value="YejL-like"/>
    <property type="match status" value="1"/>
</dbReference>
<dbReference type="HAMAP" id="MF_00816">
    <property type="entry name" value="UPF0352"/>
    <property type="match status" value="1"/>
</dbReference>
<dbReference type="InterPro" id="IPR009857">
    <property type="entry name" value="UPF0352"/>
</dbReference>
<dbReference type="InterPro" id="IPR023202">
    <property type="entry name" value="YejL_sf"/>
</dbReference>
<dbReference type="NCBIfam" id="NF010242">
    <property type="entry name" value="PRK13689.1"/>
    <property type="match status" value="1"/>
</dbReference>
<dbReference type="Pfam" id="PF07208">
    <property type="entry name" value="DUF1414"/>
    <property type="match status" value="1"/>
</dbReference>
<dbReference type="PIRSF" id="PIRSF006188">
    <property type="entry name" value="UCP006188"/>
    <property type="match status" value="1"/>
</dbReference>
<dbReference type="SUPFAM" id="SSF158651">
    <property type="entry name" value="YejL-like"/>
    <property type="match status" value="1"/>
</dbReference>
<evidence type="ECO:0000255" key="1">
    <source>
        <dbReference type="HAMAP-Rule" id="MF_00816"/>
    </source>
</evidence>
<proteinExistence type="inferred from homology"/>
<protein>
    <recommendedName>
        <fullName evidence="1">UPF0352 protein CGSHiGG_07710</fullName>
    </recommendedName>
</protein>
<sequence length="72" mass="7763">MAQHSKYSDAQLSAIVNDMIAVLEKHKAPVDLLLIALGNMASNLLTTSVPQTQREALAQAFSNSLINAVKTR</sequence>